<protein>
    <recommendedName>
        <fullName evidence="2">Probable cell division protein WhiA</fullName>
    </recommendedName>
</protein>
<keyword id="KW-0131">Cell cycle</keyword>
<keyword id="KW-0132">Cell division</keyword>
<keyword id="KW-0238">DNA-binding</keyword>
<organism>
    <name type="scientific">Mycobacterium leprae (strain Br4923)</name>
    <dbReference type="NCBI Taxonomy" id="561304"/>
    <lineage>
        <taxon>Bacteria</taxon>
        <taxon>Bacillati</taxon>
        <taxon>Actinomycetota</taxon>
        <taxon>Actinomycetes</taxon>
        <taxon>Mycobacteriales</taxon>
        <taxon>Mycobacteriaceae</taxon>
        <taxon>Mycobacterium</taxon>
    </lineage>
</organism>
<evidence type="ECO:0000250" key="1">
    <source>
        <dbReference type="UniProtKB" id="P9WF45"/>
    </source>
</evidence>
<evidence type="ECO:0000255" key="2">
    <source>
        <dbReference type="HAMAP-Rule" id="MF_01420"/>
    </source>
</evidence>
<sequence>MAMTIEVKDELSRLAVKSISARRAEVTSLLRFAGGLHIVGGRVVIEAEVDLENIARRLRKDIFDLYGYNAVVHVLSASGIRKSVRYVLRVANDGEALARQTGLLDMRGRPVRGLPAQVVGGSLIDAEAVWRGAFLAHGSLTEPGRSSALEVSCPGLEAALALVGAARKLGVNAKAREVRGADRVVVRDGEAIGVLLTRMGAQDTRLVWEERRMRREVRATANRLANFDDANLRRSARAAIAAAARAERALEILGDTVPDHLASAGKLRVEYRQASLEELGRLADPPMTKDAVAGRIRRLLSMADRKAKVEGIPDTESAVTPDLLEDA</sequence>
<accession>B8ZUN8</accession>
<name>WHIA_MYCLB</name>
<gene>
    <name evidence="2" type="primary">whiA</name>
    <name type="ordered locus">MLBr00565</name>
</gene>
<feature type="chain" id="PRO_0000376527" description="Probable cell division protein WhiA">
    <location>
        <begin position="1"/>
        <end position="327"/>
    </location>
</feature>
<feature type="DNA-binding region" description="H-T-H motif" evidence="2">
    <location>
        <begin position="275"/>
        <end position="308"/>
    </location>
</feature>
<dbReference type="EMBL" id="FM211192">
    <property type="protein sequence ID" value="CAR70658.1"/>
    <property type="status" value="ALT_INIT"/>
    <property type="molecule type" value="Genomic_DNA"/>
</dbReference>
<dbReference type="SMR" id="B8ZUN8"/>
<dbReference type="KEGG" id="mlb:MLBr00565"/>
<dbReference type="HOGENOM" id="CLU_053282_0_0_11"/>
<dbReference type="Proteomes" id="UP000006900">
    <property type="component" value="Chromosome"/>
</dbReference>
<dbReference type="GO" id="GO:0003677">
    <property type="term" value="F:DNA binding"/>
    <property type="evidence" value="ECO:0007669"/>
    <property type="project" value="UniProtKB-UniRule"/>
</dbReference>
<dbReference type="GO" id="GO:0051301">
    <property type="term" value="P:cell division"/>
    <property type="evidence" value="ECO:0007669"/>
    <property type="project" value="UniProtKB-UniRule"/>
</dbReference>
<dbReference type="GO" id="GO:0043937">
    <property type="term" value="P:regulation of sporulation"/>
    <property type="evidence" value="ECO:0007669"/>
    <property type="project" value="InterPro"/>
</dbReference>
<dbReference type="FunFam" id="3.10.28.10:FF:000001">
    <property type="entry name" value="Probable cell division protein WhiA"/>
    <property type="match status" value="1"/>
</dbReference>
<dbReference type="Gene3D" id="3.10.28.10">
    <property type="entry name" value="Homing endonucleases"/>
    <property type="match status" value="1"/>
</dbReference>
<dbReference type="HAMAP" id="MF_01420">
    <property type="entry name" value="HTH_type_WhiA"/>
    <property type="match status" value="1"/>
</dbReference>
<dbReference type="InterPro" id="IPR027434">
    <property type="entry name" value="Homing_endonucl"/>
</dbReference>
<dbReference type="InterPro" id="IPR018478">
    <property type="entry name" value="Sporu_reg_WhiA_N_dom"/>
</dbReference>
<dbReference type="InterPro" id="IPR003802">
    <property type="entry name" value="Sporulation_regulator_WhiA"/>
</dbReference>
<dbReference type="InterPro" id="IPR023054">
    <property type="entry name" value="Sporulation_regulator_WhiA_C"/>
</dbReference>
<dbReference type="InterPro" id="IPR039518">
    <property type="entry name" value="WhiA_LAGLIDADG_dom"/>
</dbReference>
<dbReference type="NCBIfam" id="TIGR00647">
    <property type="entry name" value="DNA_bind_WhiA"/>
    <property type="match status" value="1"/>
</dbReference>
<dbReference type="PANTHER" id="PTHR37307">
    <property type="entry name" value="CELL DIVISION PROTEIN WHIA-RELATED"/>
    <property type="match status" value="1"/>
</dbReference>
<dbReference type="PANTHER" id="PTHR37307:SF1">
    <property type="entry name" value="CELL DIVISION PROTEIN WHIA-RELATED"/>
    <property type="match status" value="1"/>
</dbReference>
<dbReference type="Pfam" id="PF02650">
    <property type="entry name" value="HTH_WhiA"/>
    <property type="match status" value="1"/>
</dbReference>
<dbReference type="Pfam" id="PF14527">
    <property type="entry name" value="LAGLIDADG_WhiA"/>
    <property type="match status" value="1"/>
</dbReference>
<dbReference type="Pfam" id="PF10298">
    <property type="entry name" value="WhiA_N"/>
    <property type="match status" value="1"/>
</dbReference>
<comment type="function">
    <text evidence="2">Involved in cell division and chromosome segregation.</text>
</comment>
<comment type="similarity">
    <text evidence="2">Belongs to the WhiA family.</text>
</comment>
<comment type="sequence caution" evidence="1">
    <conflict type="erroneous initiation">
        <sequence resource="EMBL-CDS" id="CAR70658"/>
    </conflict>
    <text>Truncated N-terminus.</text>
</comment>
<reference key="1">
    <citation type="journal article" date="2009" name="Nat. Genet.">
        <title>Comparative genomic and phylogeographic analysis of Mycobacterium leprae.</title>
        <authorList>
            <person name="Monot M."/>
            <person name="Honore N."/>
            <person name="Garnier T."/>
            <person name="Zidane N."/>
            <person name="Sherafi D."/>
            <person name="Paniz-Mondolfi A."/>
            <person name="Matsuoka M."/>
            <person name="Taylor G.M."/>
            <person name="Donoghue H.D."/>
            <person name="Bouwman A."/>
            <person name="Mays S."/>
            <person name="Watson C."/>
            <person name="Lockwood D."/>
            <person name="Khamispour A."/>
            <person name="Dowlati Y."/>
            <person name="Jianping S."/>
            <person name="Rea T.H."/>
            <person name="Vera-Cabrera L."/>
            <person name="Stefani M.M."/>
            <person name="Banu S."/>
            <person name="Macdonald M."/>
            <person name="Sapkota B.R."/>
            <person name="Spencer J.S."/>
            <person name="Thomas J."/>
            <person name="Harshman K."/>
            <person name="Singh P."/>
            <person name="Busso P."/>
            <person name="Gattiker A."/>
            <person name="Rougemont J."/>
            <person name="Brennan P.J."/>
            <person name="Cole S.T."/>
        </authorList>
    </citation>
    <scope>NUCLEOTIDE SEQUENCE [LARGE SCALE GENOMIC DNA]</scope>
    <source>
        <strain>Br4923</strain>
    </source>
</reference>
<proteinExistence type="inferred from homology"/>